<evidence type="ECO:0000255" key="1">
    <source>
        <dbReference type="HAMAP-Rule" id="MF_01445"/>
    </source>
</evidence>
<gene>
    <name evidence="1" type="primary">tsaD</name>
    <name type="synonym">gcp</name>
    <name type="ordered locus">BAPKO_0817</name>
    <name type="ordered locus">BafPKo_0794</name>
</gene>
<sequence>MKVLGIETSCDDCCVAVVENGIHILSNIKLSQKEHEKYYGVVPEIASRLHTEAIMSVCIKALKKANTKISEIDLIAVTSRPGLIGSLIVGLNFAKGLAISLKKPIICIDHILGHLYAPLMHSKIEYPFISLLLSGGHTLIAKQKNFDDVEILGRTLDDSCGEAFDKVAKHYDIGFPGGPNIEQISKNGDENTFKFPVTTFRKKENWYDFSYSGLKTACIHQLEKFKNKDNPTTKNNIAASFQKAAFENLITPLKRAIKDTQIKKLVIAGGVASNLYLREKIDKLKIQTYYPPLDLCTDNGAMIAGLGFNMYLKYGESPIEIEANSRIENYKNQYKRKNNEKNFSNA</sequence>
<feature type="chain" id="PRO_0000303288" description="tRNA N6-adenosine threonylcarbamoyltransferase">
    <location>
        <begin position="1"/>
        <end position="346"/>
    </location>
</feature>
<feature type="binding site" evidence="1">
    <location>
        <position position="110"/>
    </location>
    <ligand>
        <name>Fe cation</name>
        <dbReference type="ChEBI" id="CHEBI:24875"/>
    </ligand>
</feature>
<feature type="binding site" evidence="1">
    <location>
        <position position="114"/>
    </location>
    <ligand>
        <name>Fe cation</name>
        <dbReference type="ChEBI" id="CHEBI:24875"/>
    </ligand>
</feature>
<feature type="binding site" evidence="1">
    <location>
        <begin position="132"/>
        <end position="136"/>
    </location>
    <ligand>
        <name>substrate</name>
    </ligand>
</feature>
<feature type="binding site" evidence="1">
    <location>
        <position position="165"/>
    </location>
    <ligand>
        <name>substrate</name>
    </ligand>
</feature>
<feature type="binding site" evidence="1">
    <location>
        <position position="178"/>
    </location>
    <ligand>
        <name>substrate</name>
    </ligand>
</feature>
<feature type="binding site" evidence="1">
    <location>
        <position position="274"/>
    </location>
    <ligand>
        <name>substrate</name>
    </ligand>
</feature>
<feature type="binding site" evidence="1">
    <location>
        <position position="298"/>
    </location>
    <ligand>
        <name>Fe cation</name>
        <dbReference type="ChEBI" id="CHEBI:24875"/>
    </ligand>
</feature>
<organism>
    <name type="scientific">Borreliella afzelii (strain PKo)</name>
    <name type="common">Borrelia afzelii</name>
    <dbReference type="NCBI Taxonomy" id="390236"/>
    <lineage>
        <taxon>Bacteria</taxon>
        <taxon>Pseudomonadati</taxon>
        <taxon>Spirochaetota</taxon>
        <taxon>Spirochaetia</taxon>
        <taxon>Spirochaetales</taxon>
        <taxon>Borreliaceae</taxon>
        <taxon>Borreliella</taxon>
    </lineage>
</organism>
<accession>Q0SM86</accession>
<accession>G0IRU9</accession>
<comment type="function">
    <text evidence="1">Required for the formation of a threonylcarbamoyl group on adenosine at position 37 (t(6)A37) in tRNAs that read codons beginning with adenine. Is involved in the transfer of the threonylcarbamoyl moiety of threonylcarbamoyl-AMP (TC-AMP) to the N6 group of A37, together with TsaE and TsaB. TsaD likely plays a direct catalytic role in this reaction.</text>
</comment>
<comment type="catalytic activity">
    <reaction evidence="1">
        <text>L-threonylcarbamoyladenylate + adenosine(37) in tRNA = N(6)-L-threonylcarbamoyladenosine(37) in tRNA + AMP + H(+)</text>
        <dbReference type="Rhea" id="RHEA:37059"/>
        <dbReference type="Rhea" id="RHEA-COMP:10162"/>
        <dbReference type="Rhea" id="RHEA-COMP:10163"/>
        <dbReference type="ChEBI" id="CHEBI:15378"/>
        <dbReference type="ChEBI" id="CHEBI:73682"/>
        <dbReference type="ChEBI" id="CHEBI:74411"/>
        <dbReference type="ChEBI" id="CHEBI:74418"/>
        <dbReference type="ChEBI" id="CHEBI:456215"/>
        <dbReference type="EC" id="2.3.1.234"/>
    </reaction>
</comment>
<comment type="cofactor">
    <cofactor evidence="1">
        <name>Fe(2+)</name>
        <dbReference type="ChEBI" id="CHEBI:29033"/>
    </cofactor>
    <text evidence="1">Binds 1 Fe(2+) ion per subunit.</text>
</comment>
<comment type="subcellular location">
    <subcellularLocation>
        <location evidence="1">Cytoplasm</location>
    </subcellularLocation>
</comment>
<comment type="similarity">
    <text evidence="1">Belongs to the KAE1 / TsaD family.</text>
</comment>
<protein>
    <recommendedName>
        <fullName evidence="1">tRNA N6-adenosine threonylcarbamoyltransferase</fullName>
        <ecNumber evidence="1">2.3.1.234</ecNumber>
    </recommendedName>
    <alternativeName>
        <fullName evidence="1">N6-L-threonylcarbamoyladenine synthase</fullName>
        <shortName evidence="1">t(6)A synthase</shortName>
    </alternativeName>
    <alternativeName>
        <fullName evidence="1">t(6)A37 threonylcarbamoyladenosine biosynthesis protein TsaD</fullName>
    </alternativeName>
    <alternativeName>
        <fullName evidence="1">tRNA threonylcarbamoyladenosine biosynthesis protein TsaD</fullName>
    </alternativeName>
</protein>
<proteinExistence type="inferred from homology"/>
<name>TSAD_BORAP</name>
<dbReference type="EC" id="2.3.1.234" evidence="1"/>
<dbReference type="EMBL" id="CP000395">
    <property type="protein sequence ID" value="ABH02042.1"/>
    <property type="molecule type" value="Genomic_DNA"/>
</dbReference>
<dbReference type="EMBL" id="CP002933">
    <property type="protein sequence ID" value="AEL69984.1"/>
    <property type="molecule type" value="Genomic_DNA"/>
</dbReference>
<dbReference type="RefSeq" id="WP_011601213.1">
    <property type="nucleotide sequence ID" value="NC_008277.1"/>
</dbReference>
<dbReference type="SMR" id="Q0SM86"/>
<dbReference type="STRING" id="29518.BLA32_00385"/>
<dbReference type="KEGG" id="baf:BAPKO_0817"/>
<dbReference type="KEGG" id="bafz:BafPKo_0794"/>
<dbReference type="PATRIC" id="fig|390236.22.peg.757"/>
<dbReference type="eggNOG" id="COG0533">
    <property type="taxonomic scope" value="Bacteria"/>
</dbReference>
<dbReference type="HOGENOM" id="CLU_023208_0_2_12"/>
<dbReference type="OrthoDB" id="9806197at2"/>
<dbReference type="Proteomes" id="UP000005216">
    <property type="component" value="Chromosome"/>
</dbReference>
<dbReference type="GO" id="GO:0005737">
    <property type="term" value="C:cytoplasm"/>
    <property type="evidence" value="ECO:0007669"/>
    <property type="project" value="UniProtKB-SubCell"/>
</dbReference>
<dbReference type="GO" id="GO:0005506">
    <property type="term" value="F:iron ion binding"/>
    <property type="evidence" value="ECO:0007669"/>
    <property type="project" value="UniProtKB-UniRule"/>
</dbReference>
<dbReference type="GO" id="GO:0061711">
    <property type="term" value="F:N(6)-L-threonylcarbamoyladenine synthase activity"/>
    <property type="evidence" value="ECO:0007669"/>
    <property type="project" value="UniProtKB-EC"/>
</dbReference>
<dbReference type="GO" id="GO:0002949">
    <property type="term" value="P:tRNA threonylcarbamoyladenosine modification"/>
    <property type="evidence" value="ECO:0007669"/>
    <property type="project" value="UniProtKB-UniRule"/>
</dbReference>
<dbReference type="CDD" id="cd24133">
    <property type="entry name" value="ASKHA_NBD_TsaD_bac"/>
    <property type="match status" value="1"/>
</dbReference>
<dbReference type="FunFam" id="3.30.420.40:FF:000012">
    <property type="entry name" value="tRNA N6-adenosine threonylcarbamoyltransferase"/>
    <property type="match status" value="1"/>
</dbReference>
<dbReference type="Gene3D" id="3.30.420.40">
    <property type="match status" value="2"/>
</dbReference>
<dbReference type="HAMAP" id="MF_01445">
    <property type="entry name" value="TsaD"/>
    <property type="match status" value="1"/>
</dbReference>
<dbReference type="InterPro" id="IPR043129">
    <property type="entry name" value="ATPase_NBD"/>
</dbReference>
<dbReference type="InterPro" id="IPR000905">
    <property type="entry name" value="Gcp-like_dom"/>
</dbReference>
<dbReference type="InterPro" id="IPR017861">
    <property type="entry name" value="KAE1/TsaD"/>
</dbReference>
<dbReference type="InterPro" id="IPR017860">
    <property type="entry name" value="Peptidase_M22_CS"/>
</dbReference>
<dbReference type="InterPro" id="IPR022450">
    <property type="entry name" value="TsaD"/>
</dbReference>
<dbReference type="NCBIfam" id="TIGR00329">
    <property type="entry name" value="gcp_kae1"/>
    <property type="match status" value="1"/>
</dbReference>
<dbReference type="NCBIfam" id="TIGR03723">
    <property type="entry name" value="T6A_TsaD_YgjD"/>
    <property type="match status" value="1"/>
</dbReference>
<dbReference type="PANTHER" id="PTHR11735">
    <property type="entry name" value="TRNA N6-ADENOSINE THREONYLCARBAMOYLTRANSFERASE"/>
    <property type="match status" value="1"/>
</dbReference>
<dbReference type="PANTHER" id="PTHR11735:SF6">
    <property type="entry name" value="TRNA N6-ADENOSINE THREONYLCARBAMOYLTRANSFERASE, MITOCHONDRIAL"/>
    <property type="match status" value="1"/>
</dbReference>
<dbReference type="Pfam" id="PF00814">
    <property type="entry name" value="TsaD"/>
    <property type="match status" value="1"/>
</dbReference>
<dbReference type="PRINTS" id="PR00789">
    <property type="entry name" value="OSIALOPTASE"/>
</dbReference>
<dbReference type="SUPFAM" id="SSF53067">
    <property type="entry name" value="Actin-like ATPase domain"/>
    <property type="match status" value="2"/>
</dbReference>
<dbReference type="PROSITE" id="PS01016">
    <property type="entry name" value="GLYCOPROTEASE"/>
    <property type="match status" value="1"/>
</dbReference>
<reference key="1">
    <citation type="journal article" date="2006" name="BMC Genomics">
        <title>Comparative genome analysis: selection pressure on the Borrelia vls cassettes is essential for infectivity.</title>
        <authorList>
            <person name="Gloeckner G."/>
            <person name="Schulte-Spechtel U."/>
            <person name="Schilhabel M."/>
            <person name="Felder M."/>
            <person name="Suehnel J."/>
            <person name="Wilske B."/>
            <person name="Platzer M."/>
        </authorList>
    </citation>
    <scope>NUCLEOTIDE SEQUENCE [LARGE SCALE GENOMIC DNA]</scope>
    <source>
        <strain>PKo</strain>
    </source>
</reference>
<reference key="2">
    <citation type="journal article" date="2011" name="J. Bacteriol.">
        <title>Whole-genome sequences of two Borrelia afzelii and two Borrelia garinii Lyme disease agent isolates.</title>
        <authorList>
            <person name="Casjens S.R."/>
            <person name="Mongodin E.F."/>
            <person name="Qiu W.G."/>
            <person name="Dunn J.J."/>
            <person name="Luft B.J."/>
            <person name="Fraser-Liggett C.M."/>
            <person name="Schutzer S.E."/>
        </authorList>
    </citation>
    <scope>NUCLEOTIDE SEQUENCE [LARGE SCALE GENOMIC DNA]</scope>
    <source>
        <strain>PKo</strain>
    </source>
</reference>
<keyword id="KW-0012">Acyltransferase</keyword>
<keyword id="KW-0963">Cytoplasm</keyword>
<keyword id="KW-0408">Iron</keyword>
<keyword id="KW-0479">Metal-binding</keyword>
<keyword id="KW-0808">Transferase</keyword>
<keyword id="KW-0819">tRNA processing</keyword>